<comment type="catalytic activity">
    <reaction evidence="1">
        <text>sulfate + ATP + H(+) = adenosine 5'-phosphosulfate + diphosphate</text>
        <dbReference type="Rhea" id="RHEA:18133"/>
        <dbReference type="ChEBI" id="CHEBI:15378"/>
        <dbReference type="ChEBI" id="CHEBI:16189"/>
        <dbReference type="ChEBI" id="CHEBI:30616"/>
        <dbReference type="ChEBI" id="CHEBI:33019"/>
        <dbReference type="ChEBI" id="CHEBI:58243"/>
        <dbReference type="EC" id="2.7.7.4"/>
    </reaction>
</comment>
<comment type="pathway">
    <text evidence="1">Sulfur metabolism; hydrogen sulfide biosynthesis; sulfite from sulfate: step 1/3.</text>
</comment>
<comment type="similarity">
    <text evidence="1">Belongs to the sulfate adenylyltransferase family.</text>
</comment>
<evidence type="ECO:0000255" key="1">
    <source>
        <dbReference type="HAMAP-Rule" id="MF_00066"/>
    </source>
</evidence>
<accession>Q67QB5</accession>
<proteinExistence type="inferred from homology"/>
<sequence>MATQIAPHGGRLVDRWLRGPAREEALERARRLPRVRLDAREAADLEMIGDGALSPLTGFMGQADYRSVVAEMRLASGLLWALPVTLAVSRAEAESIREGEEIALEDPGGRLMAVMRVAERFAYDRGAEAARCYGTTDPAHPGVRRLLRQGEVYLGGEVWLLDRPPAPFAEYRLTPAETRAEFARRGWRTVVGFQTRNPVHRAHEYIQKCALEICDGLLLHPLVGETKDDDLPAAVRMRAYEAILEGYFPRERILLAVFPAAMRYAGPREAVWHALCRKNYGCTHFIVGRDHAGVGSFYGPYDAQRIFDHLDPAELGITPLFFDHTFWCRTCGAMASPKTCPHGPEARVALSGTRVREMLYRGEAPPPEFTRPEVARVLMEGLQAAARPQSVET</sequence>
<protein>
    <recommendedName>
        <fullName evidence="1">Sulfate adenylyltransferase</fullName>
        <ecNumber evidence="1">2.7.7.4</ecNumber>
    </recommendedName>
    <alternativeName>
        <fullName evidence="1">ATP-sulfurylase</fullName>
    </alternativeName>
    <alternativeName>
        <fullName evidence="1">Sulfate adenylate transferase</fullName>
        <shortName evidence="1">SAT</shortName>
    </alternativeName>
</protein>
<gene>
    <name evidence="1" type="primary">sat</name>
    <name type="ordered locus">STH1143</name>
</gene>
<name>SAT_SYMTH</name>
<organism>
    <name type="scientific">Symbiobacterium thermophilum (strain DSM 24528 / JCM 14929 / IAM 14863 / T)</name>
    <dbReference type="NCBI Taxonomy" id="292459"/>
    <lineage>
        <taxon>Bacteria</taxon>
        <taxon>Bacillati</taxon>
        <taxon>Bacillota</taxon>
        <taxon>Clostridia</taxon>
        <taxon>Eubacteriales</taxon>
        <taxon>Symbiobacteriaceae</taxon>
        <taxon>Symbiobacterium</taxon>
    </lineage>
</organism>
<feature type="chain" id="PRO_0000340632" description="Sulfate adenylyltransferase">
    <location>
        <begin position="1"/>
        <end position="393"/>
    </location>
</feature>
<keyword id="KW-0067">ATP-binding</keyword>
<keyword id="KW-0547">Nucleotide-binding</keyword>
<keyword id="KW-0548">Nucleotidyltransferase</keyword>
<keyword id="KW-1185">Reference proteome</keyword>
<keyword id="KW-0808">Transferase</keyword>
<dbReference type="EC" id="2.7.7.4" evidence="1"/>
<dbReference type="EMBL" id="AP006840">
    <property type="protein sequence ID" value="BAD40128.1"/>
    <property type="molecule type" value="Genomic_DNA"/>
</dbReference>
<dbReference type="RefSeq" id="WP_011195274.1">
    <property type="nucleotide sequence ID" value="NC_006177.1"/>
</dbReference>
<dbReference type="SMR" id="Q67QB5"/>
<dbReference type="STRING" id="292459.STH1143"/>
<dbReference type="KEGG" id="sth:STH1143"/>
<dbReference type="eggNOG" id="COG2046">
    <property type="taxonomic scope" value="Bacteria"/>
</dbReference>
<dbReference type="HOGENOM" id="CLU_022950_1_1_9"/>
<dbReference type="OrthoDB" id="9804504at2"/>
<dbReference type="UniPathway" id="UPA00140">
    <property type="reaction ID" value="UER00204"/>
</dbReference>
<dbReference type="Proteomes" id="UP000000417">
    <property type="component" value="Chromosome"/>
</dbReference>
<dbReference type="GO" id="GO:0005524">
    <property type="term" value="F:ATP binding"/>
    <property type="evidence" value="ECO:0007669"/>
    <property type="project" value="UniProtKB-KW"/>
</dbReference>
<dbReference type="GO" id="GO:0004781">
    <property type="term" value="F:sulfate adenylyltransferase (ATP) activity"/>
    <property type="evidence" value="ECO:0007669"/>
    <property type="project" value="UniProtKB-UniRule"/>
</dbReference>
<dbReference type="GO" id="GO:0070814">
    <property type="term" value="P:hydrogen sulfide biosynthetic process"/>
    <property type="evidence" value="ECO:0007669"/>
    <property type="project" value="UniProtKB-UniRule"/>
</dbReference>
<dbReference type="GO" id="GO:0000103">
    <property type="term" value="P:sulfate assimilation"/>
    <property type="evidence" value="ECO:0007669"/>
    <property type="project" value="UniProtKB-UniRule"/>
</dbReference>
<dbReference type="CDD" id="cd00517">
    <property type="entry name" value="ATPS"/>
    <property type="match status" value="1"/>
</dbReference>
<dbReference type="Gene3D" id="3.40.50.620">
    <property type="entry name" value="HUPs"/>
    <property type="match status" value="1"/>
</dbReference>
<dbReference type="Gene3D" id="3.10.400.10">
    <property type="entry name" value="Sulfate adenylyltransferase"/>
    <property type="match status" value="1"/>
</dbReference>
<dbReference type="HAMAP" id="MF_00066">
    <property type="entry name" value="Sulf_adenylyltr"/>
    <property type="match status" value="1"/>
</dbReference>
<dbReference type="InterPro" id="IPR025980">
    <property type="entry name" value="ATP-Sase_PUA-like_dom"/>
</dbReference>
<dbReference type="InterPro" id="IPR015947">
    <property type="entry name" value="PUA-like_sf"/>
</dbReference>
<dbReference type="InterPro" id="IPR014729">
    <property type="entry name" value="Rossmann-like_a/b/a_fold"/>
</dbReference>
<dbReference type="InterPro" id="IPR020792">
    <property type="entry name" value="SO4_adenylyltransferase_pro"/>
</dbReference>
<dbReference type="InterPro" id="IPR024951">
    <property type="entry name" value="Sulfurylase_cat_dom"/>
</dbReference>
<dbReference type="InterPro" id="IPR002650">
    <property type="entry name" value="Sulphate_adenylyltransferase"/>
</dbReference>
<dbReference type="NCBIfam" id="NF003166">
    <property type="entry name" value="PRK04149.1"/>
    <property type="match status" value="1"/>
</dbReference>
<dbReference type="NCBIfam" id="TIGR00339">
    <property type="entry name" value="sopT"/>
    <property type="match status" value="1"/>
</dbReference>
<dbReference type="PANTHER" id="PTHR43509">
    <property type="match status" value="1"/>
</dbReference>
<dbReference type="PANTHER" id="PTHR43509:SF1">
    <property type="entry name" value="SULFATE ADENYLYLTRANSFERASE"/>
    <property type="match status" value="1"/>
</dbReference>
<dbReference type="Pfam" id="PF01747">
    <property type="entry name" value="ATP-sulfurylase"/>
    <property type="match status" value="1"/>
</dbReference>
<dbReference type="Pfam" id="PF14306">
    <property type="entry name" value="PUA_2"/>
    <property type="match status" value="1"/>
</dbReference>
<dbReference type="SUPFAM" id="SSF52374">
    <property type="entry name" value="Nucleotidylyl transferase"/>
    <property type="match status" value="1"/>
</dbReference>
<dbReference type="SUPFAM" id="SSF88697">
    <property type="entry name" value="PUA domain-like"/>
    <property type="match status" value="1"/>
</dbReference>
<reference key="1">
    <citation type="journal article" date="2004" name="Nucleic Acids Res.">
        <title>Genome sequence of Symbiobacterium thermophilum, an uncultivable bacterium that depends on microbial commensalism.</title>
        <authorList>
            <person name="Ueda K."/>
            <person name="Yamashita A."/>
            <person name="Ishikawa J."/>
            <person name="Shimada M."/>
            <person name="Watsuji T."/>
            <person name="Morimura K."/>
            <person name="Ikeda H."/>
            <person name="Hattori M."/>
            <person name="Beppu T."/>
        </authorList>
    </citation>
    <scope>NUCLEOTIDE SEQUENCE [LARGE SCALE GENOMIC DNA]</scope>
    <source>
        <strain>DSM 24528 / JCM 14929 / IAM 14863 / T</strain>
    </source>
</reference>